<organism>
    <name type="scientific">Yersinia pestis</name>
    <dbReference type="NCBI Taxonomy" id="632"/>
    <lineage>
        <taxon>Bacteria</taxon>
        <taxon>Pseudomonadati</taxon>
        <taxon>Pseudomonadota</taxon>
        <taxon>Gammaproteobacteria</taxon>
        <taxon>Enterobacterales</taxon>
        <taxon>Yersiniaceae</taxon>
        <taxon>Yersinia</taxon>
    </lineage>
</organism>
<reference key="1">
    <citation type="journal article" date="2001" name="Nature">
        <title>Genome sequence of Yersinia pestis, the causative agent of plague.</title>
        <authorList>
            <person name="Parkhill J."/>
            <person name="Wren B.W."/>
            <person name="Thomson N.R."/>
            <person name="Titball R.W."/>
            <person name="Holden M.T.G."/>
            <person name="Prentice M.B."/>
            <person name="Sebaihia M."/>
            <person name="James K.D."/>
            <person name="Churcher C.M."/>
            <person name="Mungall K.L."/>
            <person name="Baker S."/>
            <person name="Basham D."/>
            <person name="Bentley S.D."/>
            <person name="Brooks K."/>
            <person name="Cerdeno-Tarraga A.-M."/>
            <person name="Chillingworth T."/>
            <person name="Cronin A."/>
            <person name="Davies R.M."/>
            <person name="Davis P."/>
            <person name="Dougan G."/>
            <person name="Feltwell T."/>
            <person name="Hamlin N."/>
            <person name="Holroyd S."/>
            <person name="Jagels K."/>
            <person name="Karlyshev A.V."/>
            <person name="Leather S."/>
            <person name="Moule S."/>
            <person name="Oyston P.C.F."/>
            <person name="Quail M.A."/>
            <person name="Rutherford K.M."/>
            <person name="Simmonds M."/>
            <person name="Skelton J."/>
            <person name="Stevens K."/>
            <person name="Whitehead S."/>
            <person name="Barrell B.G."/>
        </authorList>
    </citation>
    <scope>NUCLEOTIDE SEQUENCE [LARGE SCALE GENOMIC DNA]</scope>
    <source>
        <strain>CO-92 / Biovar Orientalis</strain>
    </source>
</reference>
<reference key="2">
    <citation type="journal article" date="2002" name="J. Bacteriol.">
        <title>Genome sequence of Yersinia pestis KIM.</title>
        <authorList>
            <person name="Deng W."/>
            <person name="Burland V."/>
            <person name="Plunkett G. III"/>
            <person name="Boutin A."/>
            <person name="Mayhew G.F."/>
            <person name="Liss P."/>
            <person name="Perna N.T."/>
            <person name="Rose D.J."/>
            <person name="Mau B."/>
            <person name="Zhou S."/>
            <person name="Schwartz D.C."/>
            <person name="Fetherston J.D."/>
            <person name="Lindler L.E."/>
            <person name="Brubaker R.R."/>
            <person name="Plano G.V."/>
            <person name="Straley S.C."/>
            <person name="McDonough K.A."/>
            <person name="Nilles M.L."/>
            <person name="Matson J.S."/>
            <person name="Blattner F.R."/>
            <person name="Perry R.D."/>
        </authorList>
    </citation>
    <scope>NUCLEOTIDE SEQUENCE [LARGE SCALE GENOMIC DNA]</scope>
    <source>
        <strain>KIM10+ / Biovar Mediaevalis</strain>
    </source>
</reference>
<reference key="3">
    <citation type="journal article" date="2004" name="DNA Res.">
        <title>Complete genome sequence of Yersinia pestis strain 91001, an isolate avirulent to humans.</title>
        <authorList>
            <person name="Song Y."/>
            <person name="Tong Z."/>
            <person name="Wang J."/>
            <person name="Wang L."/>
            <person name="Guo Z."/>
            <person name="Han Y."/>
            <person name="Zhang J."/>
            <person name="Pei D."/>
            <person name="Zhou D."/>
            <person name="Qin H."/>
            <person name="Pang X."/>
            <person name="Han Y."/>
            <person name="Zhai J."/>
            <person name="Li M."/>
            <person name="Cui B."/>
            <person name="Qi Z."/>
            <person name="Jin L."/>
            <person name="Dai R."/>
            <person name="Chen F."/>
            <person name="Li S."/>
            <person name="Ye C."/>
            <person name="Du Z."/>
            <person name="Lin W."/>
            <person name="Wang J."/>
            <person name="Yu J."/>
            <person name="Yang H."/>
            <person name="Wang J."/>
            <person name="Huang P."/>
            <person name="Yang R."/>
        </authorList>
    </citation>
    <scope>NUCLEOTIDE SEQUENCE [LARGE SCALE GENOMIC DNA]</scope>
    <source>
        <strain>91001 / Biovar Mediaevalis</strain>
    </source>
</reference>
<protein>
    <recommendedName>
        <fullName evidence="2">Exoribonuclease 2</fullName>
        <ecNumber evidence="2">3.1.13.1</ecNumber>
    </recommendedName>
    <alternativeName>
        <fullName evidence="2">Exoribonuclease II</fullName>
        <shortName evidence="2">RNase II</shortName>
        <shortName evidence="2">Ribonuclease II</shortName>
    </alternativeName>
</protein>
<proteinExistence type="inferred from homology"/>
<sequence length="644" mass="72875">MFQDNPLLAQLKQQLHTQTPRVEGVVKGTEKGFGFLEVDGQKSYFIPPPQMKKVMHGDRIIATLHTDKDREIAEPETLVEPFLSRFVGRVQRKDDRLSIVPDHPLLRDAIQCRPVRELTHSFQNGDWAVAEMCRHPLKGDRAFQADLTAFITNGEDHFVPWWVTLARHNLEREAPAMVESALNDAELEREDLTALNFVTIDSASTEDMDDALFVQDNGDGSWLLTIAIADPTAYVVENSELDLTARKRAFTNYLPGFNIPMLPRDLSDNLCSLRPNERRPVLVCRVTITEEGTLSNDIRFSAAWVESKAKLVYDDVSDWLEGNNRWQPQDTAIAEQITLLKRICDARSNWRQQHALVFKDRPDYRFLLGEKGEVLDIIVEHRRIANRIVEECMIAANVCAALALREHLGFGIYNVHTGFDPALVEQAASVLKANGVGADPQALLTLPGFCELRRHLDALPTQFLDSRIRRFQTFAEISTVPGPHFGLGLEAYATWTSPIRKYGDMVNHRLLKAMITGQQAEKPQEEITVQLAERRRLNRMAERDVGDWLYARYLQPQAGTDTRFTAEIIDITRGGLRVRLLDNGAVAFIPAPFIHAVRDEVVCSQETGTVQIKGETVYSQSDKIEVRIAEVRMETRNVIARPVA</sequence>
<accession>Q8ZED8</accession>
<accession>Q0WET1</accession>
<keyword id="KW-0963">Cytoplasm</keyword>
<keyword id="KW-0269">Exonuclease</keyword>
<keyword id="KW-0378">Hydrolase</keyword>
<keyword id="KW-0540">Nuclease</keyword>
<keyword id="KW-1185">Reference proteome</keyword>
<keyword id="KW-0694">RNA-binding</keyword>
<dbReference type="EC" id="3.1.13.1" evidence="2"/>
<dbReference type="EMBL" id="AL590842">
    <property type="protein sequence ID" value="CAL20865.1"/>
    <property type="molecule type" value="Genomic_DNA"/>
</dbReference>
<dbReference type="EMBL" id="AE009952">
    <property type="protein sequence ID" value="AAM85641.1"/>
    <property type="molecule type" value="Genomic_DNA"/>
</dbReference>
<dbReference type="EMBL" id="AE017042">
    <property type="protein sequence ID" value="AAS62250.1"/>
    <property type="molecule type" value="Genomic_DNA"/>
</dbReference>
<dbReference type="PIR" id="AF0272">
    <property type="entry name" value="AF0272"/>
</dbReference>
<dbReference type="RefSeq" id="WP_002210605.1">
    <property type="nucleotide sequence ID" value="NZ_WUCM01000001.1"/>
</dbReference>
<dbReference type="RefSeq" id="YP_002347207.1">
    <property type="nucleotide sequence ID" value="NC_003143.1"/>
</dbReference>
<dbReference type="SMR" id="Q8ZED8"/>
<dbReference type="IntAct" id="Q8ZED8">
    <property type="interactions" value="10"/>
</dbReference>
<dbReference type="STRING" id="214092.YPO2235"/>
<dbReference type="PaxDb" id="214092-YPO2235"/>
<dbReference type="DNASU" id="1147024"/>
<dbReference type="EnsemblBacteria" id="AAS62250">
    <property type="protein sequence ID" value="AAS62250"/>
    <property type="gene ID" value="YP_2034"/>
</dbReference>
<dbReference type="KEGG" id="ype:YPO2235"/>
<dbReference type="KEGG" id="ypk:y2077"/>
<dbReference type="KEGG" id="ypm:YP_2034"/>
<dbReference type="PATRIC" id="fig|214092.21.peg.2631"/>
<dbReference type="eggNOG" id="COG4776">
    <property type="taxonomic scope" value="Bacteria"/>
</dbReference>
<dbReference type="HOGENOM" id="CLU_002333_7_3_6"/>
<dbReference type="OMA" id="MVNHRLI"/>
<dbReference type="OrthoDB" id="9764149at2"/>
<dbReference type="Proteomes" id="UP000000815">
    <property type="component" value="Chromosome"/>
</dbReference>
<dbReference type="Proteomes" id="UP000001019">
    <property type="component" value="Chromosome"/>
</dbReference>
<dbReference type="Proteomes" id="UP000002490">
    <property type="component" value="Chromosome"/>
</dbReference>
<dbReference type="GO" id="GO:0005829">
    <property type="term" value="C:cytosol"/>
    <property type="evidence" value="ECO:0000318"/>
    <property type="project" value="GO_Central"/>
</dbReference>
<dbReference type="GO" id="GO:0008859">
    <property type="term" value="F:exoribonuclease II activity"/>
    <property type="evidence" value="ECO:0007669"/>
    <property type="project" value="UniProtKB-UniRule"/>
</dbReference>
<dbReference type="GO" id="GO:0003723">
    <property type="term" value="F:RNA binding"/>
    <property type="evidence" value="ECO:0007669"/>
    <property type="project" value="UniProtKB-KW"/>
</dbReference>
<dbReference type="GO" id="GO:0006402">
    <property type="term" value="P:mRNA catabolic process"/>
    <property type="evidence" value="ECO:0000318"/>
    <property type="project" value="GO_Central"/>
</dbReference>
<dbReference type="FunFam" id="2.40.50.140:FF:000079">
    <property type="entry name" value="Exoribonuclease 2"/>
    <property type="match status" value="1"/>
</dbReference>
<dbReference type="Gene3D" id="2.40.50.640">
    <property type="match status" value="1"/>
</dbReference>
<dbReference type="Gene3D" id="2.40.50.140">
    <property type="entry name" value="Nucleic acid-binding proteins"/>
    <property type="match status" value="2"/>
</dbReference>
<dbReference type="HAMAP" id="MF_01036">
    <property type="entry name" value="RNase_II"/>
    <property type="match status" value="1"/>
</dbReference>
<dbReference type="InterPro" id="IPR011129">
    <property type="entry name" value="CSD"/>
</dbReference>
<dbReference type="InterPro" id="IPR012340">
    <property type="entry name" value="NA-bd_OB-fold"/>
</dbReference>
<dbReference type="InterPro" id="IPR013223">
    <property type="entry name" value="RNase_B_OB_dom"/>
</dbReference>
<dbReference type="InterPro" id="IPR011804">
    <property type="entry name" value="RNase_II"/>
</dbReference>
<dbReference type="InterPro" id="IPR001900">
    <property type="entry name" value="RNase_II/R"/>
</dbReference>
<dbReference type="InterPro" id="IPR022966">
    <property type="entry name" value="RNase_II/R_CS"/>
</dbReference>
<dbReference type="InterPro" id="IPR004476">
    <property type="entry name" value="RNase_II/RNase_R"/>
</dbReference>
<dbReference type="InterPro" id="IPR050180">
    <property type="entry name" value="RNR_Ribonuclease"/>
</dbReference>
<dbReference type="InterPro" id="IPR003029">
    <property type="entry name" value="S1_domain"/>
</dbReference>
<dbReference type="NCBIfam" id="TIGR00358">
    <property type="entry name" value="3_prime_RNase"/>
    <property type="match status" value="1"/>
</dbReference>
<dbReference type="NCBIfam" id="NF003455">
    <property type="entry name" value="PRK05054.1"/>
    <property type="match status" value="1"/>
</dbReference>
<dbReference type="NCBIfam" id="TIGR02062">
    <property type="entry name" value="RNase_B"/>
    <property type="match status" value="1"/>
</dbReference>
<dbReference type="PANTHER" id="PTHR23355:SF37">
    <property type="entry name" value="EXORIBONUCLEASE 2"/>
    <property type="match status" value="1"/>
</dbReference>
<dbReference type="PANTHER" id="PTHR23355">
    <property type="entry name" value="RIBONUCLEASE"/>
    <property type="match status" value="1"/>
</dbReference>
<dbReference type="Pfam" id="PF08206">
    <property type="entry name" value="OB_RNB"/>
    <property type="match status" value="1"/>
</dbReference>
<dbReference type="Pfam" id="PF00773">
    <property type="entry name" value="RNB"/>
    <property type="match status" value="1"/>
</dbReference>
<dbReference type="Pfam" id="PF00575">
    <property type="entry name" value="S1"/>
    <property type="match status" value="1"/>
</dbReference>
<dbReference type="SMART" id="SM00357">
    <property type="entry name" value="CSP"/>
    <property type="match status" value="1"/>
</dbReference>
<dbReference type="SMART" id="SM00955">
    <property type="entry name" value="RNB"/>
    <property type="match status" value="1"/>
</dbReference>
<dbReference type="SUPFAM" id="SSF50249">
    <property type="entry name" value="Nucleic acid-binding proteins"/>
    <property type="match status" value="4"/>
</dbReference>
<dbReference type="PROSITE" id="PS01175">
    <property type="entry name" value="RIBONUCLEASE_II"/>
    <property type="match status" value="1"/>
</dbReference>
<name>RNB_YERPE</name>
<feature type="chain" id="PRO_0000166394" description="Exoribonuclease 2">
    <location>
        <begin position="1"/>
        <end position="644"/>
    </location>
</feature>
<feature type="domain" description="RNB" evidence="1">
    <location>
        <begin position="189"/>
        <end position="516"/>
    </location>
</feature>
<feature type="domain" description="S1 motif" evidence="2">
    <location>
        <begin position="561"/>
        <end position="643"/>
    </location>
</feature>
<gene>
    <name evidence="2" type="primary">rnb</name>
    <name type="ordered locus">YPO2235</name>
    <name type="ordered locus">y2077</name>
    <name type="ordered locus">YP_2034</name>
</gene>
<evidence type="ECO:0000255" key="1"/>
<evidence type="ECO:0000255" key="2">
    <source>
        <dbReference type="HAMAP-Rule" id="MF_01036"/>
    </source>
</evidence>
<comment type="function">
    <text evidence="2">Involved in mRNA degradation. Hydrolyzes single-stranded polyribonucleotides processively in the 3' to 5' direction.</text>
</comment>
<comment type="catalytic activity">
    <reaction evidence="2">
        <text>Exonucleolytic cleavage in the 3'- to 5'-direction to yield nucleoside 5'-phosphates.</text>
        <dbReference type="EC" id="3.1.13.1"/>
    </reaction>
</comment>
<comment type="subcellular location">
    <subcellularLocation>
        <location evidence="2">Cytoplasm</location>
    </subcellularLocation>
</comment>
<comment type="similarity">
    <text evidence="2">Belongs to the RNR ribonuclease family. RNase II subfamily.</text>
</comment>